<name>HFC1A_ORYSJ</name>
<reference key="1">
    <citation type="submission" date="2003-07" db="EMBL/GenBank/DDBJ databases">
        <title>Isolation rice heat shock factor by modified yeast one-hybrid system method.</title>
        <authorList>
            <person name="Yao Q.-H."/>
            <person name="Peng R.-H."/>
            <person name="Xiong A.-S."/>
        </authorList>
    </citation>
    <scope>NUCLEOTIDE SEQUENCE [MRNA] (ISOFORM 2)</scope>
</reference>
<reference key="2">
    <citation type="journal article" date="2002" name="Nature">
        <title>The genome sequence and structure of rice chromosome 1.</title>
        <authorList>
            <person name="Sasaki T."/>
            <person name="Matsumoto T."/>
            <person name="Yamamoto K."/>
            <person name="Sakata K."/>
            <person name="Baba T."/>
            <person name="Katayose Y."/>
            <person name="Wu J."/>
            <person name="Niimura Y."/>
            <person name="Cheng Z."/>
            <person name="Nagamura Y."/>
            <person name="Antonio B.A."/>
            <person name="Kanamori H."/>
            <person name="Hosokawa S."/>
            <person name="Masukawa M."/>
            <person name="Arikawa K."/>
            <person name="Chiden Y."/>
            <person name="Hayashi M."/>
            <person name="Okamoto M."/>
            <person name="Ando T."/>
            <person name="Aoki H."/>
            <person name="Arita K."/>
            <person name="Hamada M."/>
            <person name="Harada C."/>
            <person name="Hijishita S."/>
            <person name="Honda M."/>
            <person name="Ichikawa Y."/>
            <person name="Idonuma A."/>
            <person name="Iijima M."/>
            <person name="Ikeda M."/>
            <person name="Ikeno M."/>
            <person name="Ito S."/>
            <person name="Ito T."/>
            <person name="Ito Y."/>
            <person name="Ito Y."/>
            <person name="Iwabuchi A."/>
            <person name="Kamiya K."/>
            <person name="Karasawa W."/>
            <person name="Katagiri S."/>
            <person name="Kikuta A."/>
            <person name="Kobayashi N."/>
            <person name="Kono I."/>
            <person name="Machita K."/>
            <person name="Maehara T."/>
            <person name="Mizuno H."/>
            <person name="Mizubayashi T."/>
            <person name="Mukai Y."/>
            <person name="Nagasaki H."/>
            <person name="Nakashima M."/>
            <person name="Nakama Y."/>
            <person name="Nakamichi Y."/>
            <person name="Nakamura M."/>
            <person name="Namiki N."/>
            <person name="Negishi M."/>
            <person name="Ohta I."/>
            <person name="Ono N."/>
            <person name="Saji S."/>
            <person name="Sakai K."/>
            <person name="Shibata M."/>
            <person name="Shimokawa T."/>
            <person name="Shomura A."/>
            <person name="Song J."/>
            <person name="Takazaki Y."/>
            <person name="Terasawa K."/>
            <person name="Tsuji K."/>
            <person name="Waki K."/>
            <person name="Yamagata H."/>
            <person name="Yamane H."/>
            <person name="Yoshiki S."/>
            <person name="Yoshihara R."/>
            <person name="Yukawa K."/>
            <person name="Zhong H."/>
            <person name="Iwama H."/>
            <person name="Endo T."/>
            <person name="Ito H."/>
            <person name="Hahn J.H."/>
            <person name="Kim H.-I."/>
            <person name="Eun M.-Y."/>
            <person name="Yano M."/>
            <person name="Jiang J."/>
            <person name="Gojobori T."/>
        </authorList>
    </citation>
    <scope>NUCLEOTIDE SEQUENCE [LARGE SCALE GENOMIC DNA]</scope>
    <source>
        <strain>cv. Nipponbare</strain>
    </source>
</reference>
<reference key="3">
    <citation type="journal article" date="2005" name="Nature">
        <title>The map-based sequence of the rice genome.</title>
        <authorList>
            <consortium name="International rice genome sequencing project (IRGSP)"/>
        </authorList>
    </citation>
    <scope>NUCLEOTIDE SEQUENCE [LARGE SCALE GENOMIC DNA]</scope>
    <source>
        <strain>cv. Nipponbare</strain>
    </source>
</reference>
<reference key="4">
    <citation type="journal article" date="2008" name="Nucleic Acids Res.">
        <title>The rice annotation project database (RAP-DB): 2008 update.</title>
        <authorList>
            <consortium name="The rice annotation project (RAP)"/>
        </authorList>
    </citation>
    <scope>GENOME REANNOTATION</scope>
    <source>
        <strain>cv. Nipponbare</strain>
    </source>
</reference>
<reference key="5">
    <citation type="journal article" date="2013" name="Rice">
        <title>Improvement of the Oryza sativa Nipponbare reference genome using next generation sequence and optical map data.</title>
        <authorList>
            <person name="Kawahara Y."/>
            <person name="de la Bastide M."/>
            <person name="Hamilton J.P."/>
            <person name="Kanamori H."/>
            <person name="McCombie W.R."/>
            <person name="Ouyang S."/>
            <person name="Schwartz D.C."/>
            <person name="Tanaka T."/>
            <person name="Wu J."/>
            <person name="Zhou S."/>
            <person name="Childs K.L."/>
            <person name="Davidson R.M."/>
            <person name="Lin H."/>
            <person name="Quesada-Ocampo L."/>
            <person name="Vaillancourt B."/>
            <person name="Sakai H."/>
            <person name="Lee S.S."/>
            <person name="Kim J."/>
            <person name="Numa H."/>
            <person name="Itoh T."/>
            <person name="Buell C.R."/>
            <person name="Matsumoto T."/>
        </authorList>
    </citation>
    <scope>GENOME REANNOTATION</scope>
    <source>
        <strain>cv. Nipponbare</strain>
    </source>
</reference>
<reference key="6">
    <citation type="journal article" date="2005" name="PLoS Biol.">
        <title>The genomes of Oryza sativa: a history of duplications.</title>
        <authorList>
            <person name="Yu J."/>
            <person name="Wang J."/>
            <person name="Lin W."/>
            <person name="Li S."/>
            <person name="Li H."/>
            <person name="Zhou J."/>
            <person name="Ni P."/>
            <person name="Dong W."/>
            <person name="Hu S."/>
            <person name="Zeng C."/>
            <person name="Zhang J."/>
            <person name="Zhang Y."/>
            <person name="Li R."/>
            <person name="Xu Z."/>
            <person name="Li S."/>
            <person name="Li X."/>
            <person name="Zheng H."/>
            <person name="Cong L."/>
            <person name="Lin L."/>
            <person name="Yin J."/>
            <person name="Geng J."/>
            <person name="Li G."/>
            <person name="Shi J."/>
            <person name="Liu J."/>
            <person name="Lv H."/>
            <person name="Li J."/>
            <person name="Wang J."/>
            <person name="Deng Y."/>
            <person name="Ran L."/>
            <person name="Shi X."/>
            <person name="Wang X."/>
            <person name="Wu Q."/>
            <person name="Li C."/>
            <person name="Ren X."/>
            <person name="Wang J."/>
            <person name="Wang X."/>
            <person name="Li D."/>
            <person name="Liu D."/>
            <person name="Zhang X."/>
            <person name="Ji Z."/>
            <person name="Zhao W."/>
            <person name="Sun Y."/>
            <person name="Zhang Z."/>
            <person name="Bao J."/>
            <person name="Han Y."/>
            <person name="Dong L."/>
            <person name="Ji J."/>
            <person name="Chen P."/>
            <person name="Wu S."/>
            <person name="Liu J."/>
            <person name="Xiao Y."/>
            <person name="Bu D."/>
            <person name="Tan J."/>
            <person name="Yang L."/>
            <person name="Ye C."/>
            <person name="Zhang J."/>
            <person name="Xu J."/>
            <person name="Zhou Y."/>
            <person name="Yu Y."/>
            <person name="Zhang B."/>
            <person name="Zhuang S."/>
            <person name="Wei H."/>
            <person name="Liu B."/>
            <person name="Lei M."/>
            <person name="Yu H."/>
            <person name="Li Y."/>
            <person name="Xu H."/>
            <person name="Wei S."/>
            <person name="He X."/>
            <person name="Fang L."/>
            <person name="Zhang Z."/>
            <person name="Zhang Y."/>
            <person name="Huang X."/>
            <person name="Su Z."/>
            <person name="Tong W."/>
            <person name="Li J."/>
            <person name="Tong Z."/>
            <person name="Li S."/>
            <person name="Ye J."/>
            <person name="Wang L."/>
            <person name="Fang L."/>
            <person name="Lei T."/>
            <person name="Chen C.-S."/>
            <person name="Chen H.-C."/>
            <person name="Xu Z."/>
            <person name="Li H."/>
            <person name="Huang H."/>
            <person name="Zhang F."/>
            <person name="Xu H."/>
            <person name="Li N."/>
            <person name="Zhao C."/>
            <person name="Li S."/>
            <person name="Dong L."/>
            <person name="Huang Y."/>
            <person name="Li L."/>
            <person name="Xi Y."/>
            <person name="Qi Q."/>
            <person name="Li W."/>
            <person name="Zhang B."/>
            <person name="Hu W."/>
            <person name="Zhang Y."/>
            <person name="Tian X."/>
            <person name="Jiao Y."/>
            <person name="Liang X."/>
            <person name="Jin J."/>
            <person name="Gao L."/>
            <person name="Zheng W."/>
            <person name="Hao B."/>
            <person name="Liu S.-M."/>
            <person name="Wang W."/>
            <person name="Yuan L."/>
            <person name="Cao M."/>
            <person name="McDermott J."/>
            <person name="Samudrala R."/>
            <person name="Wang J."/>
            <person name="Wong G.K.-S."/>
            <person name="Yang H."/>
        </authorList>
    </citation>
    <scope>NUCLEOTIDE SEQUENCE [LARGE SCALE GENOMIC DNA]</scope>
    <source>
        <strain>cv. Nipponbare</strain>
    </source>
</reference>
<reference key="7">
    <citation type="journal article" date="2003" name="Science">
        <title>Collection, mapping, and annotation of over 28,000 cDNA clones from japonica rice.</title>
        <authorList>
            <consortium name="The rice full-length cDNA consortium"/>
        </authorList>
    </citation>
    <scope>NUCLEOTIDE SEQUENCE [LARGE SCALE MRNA] (ISOFORM 1)</scope>
    <source>
        <strain>cv. Nipponbare</strain>
    </source>
</reference>
<reference key="8">
    <citation type="journal article" date="2004" name="J. Biosci.">
        <title>Heat stress response in plants: a complex game with chaperones and more than twenty heat stress transcription factors.</title>
        <authorList>
            <person name="Baniwal S.K."/>
            <person name="Bharti K."/>
            <person name="Chan K.Y."/>
            <person name="Fauth M."/>
            <person name="Ganguli A."/>
            <person name="Kotak S."/>
            <person name="Mishra S.K."/>
            <person name="Nover L."/>
            <person name="Port M."/>
            <person name="Scharf K.-D."/>
            <person name="Tripp J."/>
            <person name="Weber C."/>
            <person name="Zielinski D."/>
            <person name="von Koskull-Doering P."/>
        </authorList>
    </citation>
    <scope>GENE FAMILY</scope>
    <scope>NOMENCLATURE</scope>
</reference>
<reference key="9">
    <citation type="journal article" date="2008" name="J. Genet. Genomics">
        <title>Genome-wide analysis of heat shock transcription factor families in rice and Arabidopsis.</title>
        <authorList>
            <person name="Guo J."/>
            <person name="Wu J."/>
            <person name="Ji Q."/>
            <person name="Wang C."/>
            <person name="Luo L."/>
            <person name="Yuan Y."/>
            <person name="Wang Y."/>
            <person name="Wang J."/>
        </authorList>
    </citation>
    <scope>GENE FAMILY</scope>
    <scope>NOMENCLATURE</scope>
</reference>
<evidence type="ECO:0000250" key="1"/>
<evidence type="ECO:0000255" key="2"/>
<evidence type="ECO:0000256" key="3">
    <source>
        <dbReference type="SAM" id="MobiDB-lite"/>
    </source>
</evidence>
<evidence type="ECO:0000303" key="4">
    <source ref="1"/>
</evidence>
<evidence type="ECO:0000305" key="5"/>
<evidence type="ECO:0000312" key="6">
    <source>
        <dbReference type="EMBL" id="EEE55016.1"/>
    </source>
</evidence>
<dbReference type="EMBL" id="AY344495">
    <property type="protein sequence ID" value="AAQ23067.1"/>
    <property type="molecule type" value="mRNA"/>
</dbReference>
<dbReference type="EMBL" id="AP002744">
    <property type="protein sequence ID" value="BAD61149.1"/>
    <property type="molecule type" value="Genomic_DNA"/>
</dbReference>
<dbReference type="EMBL" id="AP008207">
    <property type="protein sequence ID" value="BAF05537.1"/>
    <property type="molecule type" value="Genomic_DNA"/>
</dbReference>
<dbReference type="EMBL" id="AP014957">
    <property type="protein sequence ID" value="BAS73249.1"/>
    <property type="molecule type" value="Genomic_DNA"/>
</dbReference>
<dbReference type="EMBL" id="CM000138">
    <property type="protein sequence ID" value="EEE55016.1"/>
    <property type="molecule type" value="Genomic_DNA"/>
</dbReference>
<dbReference type="EMBL" id="AK069479">
    <property type="status" value="NOT_ANNOTATED_CDS"/>
    <property type="molecule type" value="mRNA"/>
</dbReference>
<dbReference type="RefSeq" id="XP_015636084.1">
    <property type="nucleotide sequence ID" value="XM_015780598.1"/>
</dbReference>
<dbReference type="SMR" id="Q6VBA4"/>
<dbReference type="FunCoup" id="Q6VBA4">
    <property type="interactions" value="17"/>
</dbReference>
<dbReference type="STRING" id="39947.Q6VBA4"/>
<dbReference type="PaxDb" id="39947-Q6VBA4"/>
<dbReference type="EnsemblPlants" id="Os01t0625300-01">
    <molecule id="Q6VBA4-1"/>
    <property type="protein sequence ID" value="Os01t0625300-01"/>
    <property type="gene ID" value="Os01g0625300"/>
</dbReference>
<dbReference type="Gramene" id="Os01t0625300-01">
    <molecule id="Q6VBA4-1"/>
    <property type="protein sequence ID" value="Os01t0625300-01"/>
    <property type="gene ID" value="Os01g0625300"/>
</dbReference>
<dbReference type="KEGG" id="dosa:Os01g0625300"/>
<dbReference type="eggNOG" id="KOG0627">
    <property type="taxonomic scope" value="Eukaryota"/>
</dbReference>
<dbReference type="HOGENOM" id="CLU_878253_0_0_1"/>
<dbReference type="InParanoid" id="Q6VBA4"/>
<dbReference type="OMA" id="VCEPRTD"/>
<dbReference type="OrthoDB" id="60033at2759"/>
<dbReference type="Proteomes" id="UP000000763">
    <property type="component" value="Chromosome 1"/>
</dbReference>
<dbReference type="Proteomes" id="UP000007752">
    <property type="component" value="Chromosome 1"/>
</dbReference>
<dbReference type="Proteomes" id="UP000059680">
    <property type="component" value="Chromosome 1"/>
</dbReference>
<dbReference type="GO" id="GO:0005634">
    <property type="term" value="C:nucleus"/>
    <property type="evidence" value="ECO:0000318"/>
    <property type="project" value="GO_Central"/>
</dbReference>
<dbReference type="GO" id="GO:0003700">
    <property type="term" value="F:DNA-binding transcription factor activity"/>
    <property type="evidence" value="ECO:0000318"/>
    <property type="project" value="GO_Central"/>
</dbReference>
<dbReference type="GO" id="GO:0043565">
    <property type="term" value="F:sequence-specific DNA binding"/>
    <property type="evidence" value="ECO:0007669"/>
    <property type="project" value="InterPro"/>
</dbReference>
<dbReference type="GO" id="GO:0034605">
    <property type="term" value="P:cellular response to heat"/>
    <property type="evidence" value="ECO:0000318"/>
    <property type="project" value="GO_Central"/>
</dbReference>
<dbReference type="GO" id="GO:0006357">
    <property type="term" value="P:regulation of transcription by RNA polymerase II"/>
    <property type="evidence" value="ECO:0000318"/>
    <property type="project" value="GO_Central"/>
</dbReference>
<dbReference type="FunFam" id="1.10.10.10:FF:000037">
    <property type="entry name" value="Heat stress transcription factor B-4"/>
    <property type="match status" value="1"/>
</dbReference>
<dbReference type="Gene3D" id="1.10.10.10">
    <property type="entry name" value="Winged helix-like DNA-binding domain superfamily/Winged helix DNA-binding domain"/>
    <property type="match status" value="1"/>
</dbReference>
<dbReference type="InterPro" id="IPR000232">
    <property type="entry name" value="HSF_DNA-bd"/>
</dbReference>
<dbReference type="InterPro" id="IPR036388">
    <property type="entry name" value="WH-like_DNA-bd_sf"/>
</dbReference>
<dbReference type="InterPro" id="IPR036390">
    <property type="entry name" value="WH_DNA-bd_sf"/>
</dbReference>
<dbReference type="PANTHER" id="PTHR10015">
    <property type="entry name" value="HEAT SHOCK TRANSCRIPTION FACTOR"/>
    <property type="match status" value="1"/>
</dbReference>
<dbReference type="PANTHER" id="PTHR10015:SF460">
    <property type="entry name" value="HEAT STRESS TRANSCRIPTION FACTOR C-1A"/>
    <property type="match status" value="1"/>
</dbReference>
<dbReference type="Pfam" id="PF00447">
    <property type="entry name" value="HSF_DNA-bind"/>
    <property type="match status" value="1"/>
</dbReference>
<dbReference type="PRINTS" id="PR00056">
    <property type="entry name" value="HSFDOMAIN"/>
</dbReference>
<dbReference type="SMART" id="SM00415">
    <property type="entry name" value="HSF"/>
    <property type="match status" value="1"/>
</dbReference>
<dbReference type="SUPFAM" id="SSF46785">
    <property type="entry name" value="Winged helix' DNA-binding domain"/>
    <property type="match status" value="1"/>
</dbReference>
<dbReference type="PROSITE" id="PS00434">
    <property type="entry name" value="HSF_DOMAIN"/>
    <property type="match status" value="1"/>
</dbReference>
<proteinExistence type="evidence at transcript level"/>
<comment type="function">
    <text evidence="1">Transcriptional regulator that specifically binds DNA of heat shock promoter elements (HSE).</text>
</comment>
<comment type="subunit">
    <text evidence="1">Homotrimer.</text>
</comment>
<comment type="subcellular location">
    <subcellularLocation>
        <location evidence="5">Nucleus</location>
    </subcellularLocation>
</comment>
<comment type="alternative products">
    <event type="alternative splicing"/>
    <isoform>
        <id>Q6VBA4-1</id>
        <name>1</name>
        <sequence type="displayed"/>
    </isoform>
    <isoform>
        <id>Q6VBA4-2</id>
        <name>2</name>
        <sequence type="described" ref="VSP_035452"/>
    </isoform>
</comment>
<comment type="domain">
    <text>The hydrophobic-rich region (HR-A/B) corresponds to the oligomerization domain.</text>
</comment>
<comment type="PTM">
    <text evidence="1">Exhibits temperature-dependent phosphorylation.</text>
</comment>
<comment type="miscellaneous">
    <molecule>Isoform 2</molecule>
    <text evidence="5">May be due to a competing donor splice site.</text>
</comment>
<comment type="similarity">
    <text evidence="5">Belongs to the HSF family. Class C subfamily.</text>
</comment>
<gene>
    <name type="primary">HSFC1A</name>
    <name type="synonym">HSF02</name>
    <name type="synonym">HSF13</name>
    <name type="ordered locus">Os01g0625300</name>
    <name type="ordered locus">LOC_Os01g43590</name>
    <name type="ORF">OsJ_002575</name>
    <name evidence="6" type="ORF">OsJ_02668</name>
    <name type="ORF">P0006C01.11</name>
</gene>
<organism>
    <name type="scientific">Oryza sativa subsp. japonica</name>
    <name type="common">Rice</name>
    <dbReference type="NCBI Taxonomy" id="39947"/>
    <lineage>
        <taxon>Eukaryota</taxon>
        <taxon>Viridiplantae</taxon>
        <taxon>Streptophyta</taxon>
        <taxon>Embryophyta</taxon>
        <taxon>Tracheophyta</taxon>
        <taxon>Spermatophyta</taxon>
        <taxon>Magnoliopsida</taxon>
        <taxon>Liliopsida</taxon>
        <taxon>Poales</taxon>
        <taxon>Poaceae</taxon>
        <taxon>BOP clade</taxon>
        <taxon>Oryzoideae</taxon>
        <taxon>Oryzeae</taxon>
        <taxon>Oryzinae</taxon>
        <taxon>Oryza</taxon>
        <taxon>Oryza sativa</taxon>
    </lineage>
</organism>
<feature type="chain" id="PRO_0000350841" description="Heat stress transcription factor C-1a">
    <location>
        <begin position="1"/>
        <end position="339"/>
    </location>
</feature>
<feature type="region of interest" description="Hydrophobic repeat HR-A/B">
    <location>
        <begin position="176"/>
        <end position="212"/>
    </location>
</feature>
<feature type="region of interest" description="Disordered" evidence="3">
    <location>
        <begin position="227"/>
        <end position="248"/>
    </location>
</feature>
<feature type="coiled-coil region" evidence="2">
    <location>
        <begin position="154"/>
        <end position="217"/>
    </location>
</feature>
<feature type="short sequence motif" description="Nuclear localization signal" evidence="2">
    <location>
        <begin position="229"/>
        <end position="233"/>
    </location>
</feature>
<feature type="splice variant" id="VSP_035452" description="In isoform 2." evidence="4">
    <original>Y</original>
    <variation>YVSIIQSPAP</variation>
    <location>
        <position position="85"/>
    </location>
</feature>
<feature type="sequence conflict" description="In Ref. 7; AK069479." evidence="5" ref="7">
    <original>H</original>
    <variation>L</variation>
    <location>
        <position position="221"/>
    </location>
</feature>
<accession>Q6VBA4</accession>
<accession>B9EY53</accession>
<accession>Q5ZEA6</accession>
<keyword id="KW-0025">Alternative splicing</keyword>
<keyword id="KW-0175">Coiled coil</keyword>
<keyword id="KW-0238">DNA-binding</keyword>
<keyword id="KW-0539">Nucleus</keyword>
<keyword id="KW-0597">Phosphoprotein</keyword>
<keyword id="KW-1185">Reference proteome</keyword>
<keyword id="KW-0346">Stress response</keyword>
<keyword id="KW-0804">Transcription</keyword>
<keyword id="KW-0805">Transcription regulation</keyword>
<protein>
    <recommendedName>
        <fullName>Heat stress transcription factor C-1a</fullName>
    </recommendedName>
    <alternativeName>
        <fullName>Heat stress transcription factor 13</fullName>
        <shortName>rHsf13</shortName>
    </alternativeName>
    <alternativeName>
        <fullName>Heat stress transcription factor 2</fullName>
        <shortName>OsHsf-02</shortName>
    </alternativeName>
</protein>
<sequence>MDGLHTELALGLIGCCGGDGQQQTAPFVAKTYQMVCDPRTDALVRWGRDNNSFVVVDPAAFSQLLLPCFFKHGNFSSFVRQLNTYGFRKVHPDRWEFAHESFLRGQTHLLPRIVRRKKRGEGGGGGGGASCSFGGGAGEHQVAAAAASVGMSGEEEDAAEDVLAKEAALFEEVQRLRHEQTAIGEELARMSQRLQATERRPDQLMSFLAKLADDPNAVTGHLLEQAAERKRRRQHLPSHEPTVCPLPPAPPPQPPQPLLALAGAAAMDGTYWWTTEHHHHHHHQMKPMTVLPSLEPPTASCGVHQVPELGGGGVMGLTTDGEAKVEPPFPFCLLGQAFF</sequence>